<feature type="chain" id="PRO_1000056748" description="UPF0225 protein XOO0286">
    <location>
        <begin position="1"/>
        <end position="129"/>
    </location>
</feature>
<gene>
    <name type="ordered locus">XOO0286</name>
</gene>
<accession>Q5H680</accession>
<sequence>MPTSMPNDPCPCGRPADYARCCGPYHAGAAAPDAETLMRARYSAHVRRDAAYLLASWHPSTRPGELSLDEGGRTTWLGLTVQRTLETGPETAEVVFLARYRIGGGSAVRMTEHSRFVRDAGRWYYLDAR</sequence>
<evidence type="ECO:0000255" key="1">
    <source>
        <dbReference type="HAMAP-Rule" id="MF_00612"/>
    </source>
</evidence>
<organism>
    <name type="scientific">Xanthomonas oryzae pv. oryzae (strain KACC10331 / KXO85)</name>
    <dbReference type="NCBI Taxonomy" id="291331"/>
    <lineage>
        <taxon>Bacteria</taxon>
        <taxon>Pseudomonadati</taxon>
        <taxon>Pseudomonadota</taxon>
        <taxon>Gammaproteobacteria</taxon>
        <taxon>Lysobacterales</taxon>
        <taxon>Lysobacteraceae</taxon>
        <taxon>Xanthomonas</taxon>
    </lineage>
</organism>
<name>Y286_XANOR</name>
<proteinExistence type="inferred from homology"/>
<dbReference type="EMBL" id="AE013598">
    <property type="protein sequence ID" value="AAW73540.1"/>
    <property type="molecule type" value="Genomic_DNA"/>
</dbReference>
<dbReference type="SMR" id="Q5H680"/>
<dbReference type="STRING" id="291331.XOO0286"/>
<dbReference type="KEGG" id="xoo:XOO0286"/>
<dbReference type="HOGENOM" id="CLU_099590_2_0_6"/>
<dbReference type="Proteomes" id="UP000006735">
    <property type="component" value="Chromosome"/>
</dbReference>
<dbReference type="Gene3D" id="3.10.450.50">
    <property type="match status" value="1"/>
</dbReference>
<dbReference type="HAMAP" id="MF_00612">
    <property type="entry name" value="UPF0225"/>
    <property type="match status" value="1"/>
</dbReference>
<dbReference type="InterPro" id="IPR032710">
    <property type="entry name" value="NTF2-like_dom_sf"/>
</dbReference>
<dbReference type="InterPro" id="IPR004027">
    <property type="entry name" value="SEC_C_motif"/>
</dbReference>
<dbReference type="InterPro" id="IPR023006">
    <property type="entry name" value="UPF0225"/>
</dbReference>
<dbReference type="InterPro" id="IPR048469">
    <property type="entry name" value="YchJ-like_M"/>
</dbReference>
<dbReference type="NCBIfam" id="NF003262">
    <property type="entry name" value="PRK04233.1"/>
    <property type="match status" value="1"/>
</dbReference>
<dbReference type="PANTHER" id="PTHR33747:SF1">
    <property type="entry name" value="ADENYLATE CYCLASE-ASSOCIATED CAP C-TERMINAL DOMAIN-CONTAINING PROTEIN"/>
    <property type="match status" value="1"/>
</dbReference>
<dbReference type="PANTHER" id="PTHR33747">
    <property type="entry name" value="UPF0225 PROTEIN SCO1677"/>
    <property type="match status" value="1"/>
</dbReference>
<dbReference type="Pfam" id="PF02810">
    <property type="entry name" value="SEC-C"/>
    <property type="match status" value="1"/>
</dbReference>
<dbReference type="Pfam" id="PF17775">
    <property type="entry name" value="YchJ_M-like"/>
    <property type="match status" value="1"/>
</dbReference>
<dbReference type="SUPFAM" id="SSF54427">
    <property type="entry name" value="NTF2-like"/>
    <property type="match status" value="1"/>
</dbReference>
<protein>
    <recommendedName>
        <fullName evidence="1">UPF0225 protein XOO0286</fullName>
    </recommendedName>
</protein>
<keyword id="KW-1185">Reference proteome</keyword>
<comment type="similarity">
    <text evidence="1">Belongs to the UPF0225 family.</text>
</comment>
<reference key="1">
    <citation type="journal article" date="2005" name="Nucleic Acids Res.">
        <title>The genome sequence of Xanthomonas oryzae pathovar oryzae KACC10331, the bacterial blight pathogen of rice.</title>
        <authorList>
            <person name="Lee B.-M."/>
            <person name="Park Y.-J."/>
            <person name="Park D.-S."/>
            <person name="Kang H.-W."/>
            <person name="Kim J.-G."/>
            <person name="Song E.-S."/>
            <person name="Park I.-C."/>
            <person name="Yoon U.-H."/>
            <person name="Hahn J.-H."/>
            <person name="Koo B.-S."/>
            <person name="Lee G.-B."/>
            <person name="Kim H."/>
            <person name="Park H.-S."/>
            <person name="Yoon K.-O."/>
            <person name="Kim J.-H."/>
            <person name="Jung C.-H."/>
            <person name="Koh N.-H."/>
            <person name="Seo J.-S."/>
            <person name="Go S.-J."/>
        </authorList>
    </citation>
    <scope>NUCLEOTIDE SEQUENCE [LARGE SCALE GENOMIC DNA]</scope>
    <source>
        <strain>KACC10331 / KXO85</strain>
    </source>
</reference>